<organism>
    <name type="scientific">Escherichia coli (strain SMS-3-5 / SECEC)</name>
    <dbReference type="NCBI Taxonomy" id="439855"/>
    <lineage>
        <taxon>Bacteria</taxon>
        <taxon>Pseudomonadati</taxon>
        <taxon>Pseudomonadota</taxon>
        <taxon>Gammaproteobacteria</taxon>
        <taxon>Enterobacterales</taxon>
        <taxon>Enterobacteriaceae</taxon>
        <taxon>Escherichia</taxon>
    </lineage>
</organism>
<evidence type="ECO:0000255" key="1">
    <source>
        <dbReference type="HAMAP-Rule" id="MF_01063"/>
    </source>
</evidence>
<reference key="1">
    <citation type="journal article" date="2008" name="J. Bacteriol.">
        <title>Insights into the environmental resistance gene pool from the genome sequence of the multidrug-resistant environmental isolate Escherichia coli SMS-3-5.</title>
        <authorList>
            <person name="Fricke W.F."/>
            <person name="Wright M.S."/>
            <person name="Lindell A.H."/>
            <person name="Harkins D.M."/>
            <person name="Baker-Austin C."/>
            <person name="Ravel J."/>
            <person name="Stepanauskas R."/>
        </authorList>
    </citation>
    <scope>NUCLEOTIDE SEQUENCE [LARGE SCALE GENOMIC DNA]</scope>
    <source>
        <strain>SMS-3-5 / SECEC</strain>
    </source>
</reference>
<feature type="chain" id="PRO_1000136516" description="Esterase FrsA">
    <location>
        <begin position="1"/>
        <end position="414"/>
    </location>
</feature>
<accession>B1LHT5</accession>
<protein>
    <recommendedName>
        <fullName evidence="1">Esterase FrsA</fullName>
        <ecNumber evidence="1">3.1.1.1</ecNumber>
    </recommendedName>
</protein>
<gene>
    <name evidence="1" type="primary">frsA</name>
    <name type="ordered locus">EcSMS35_0293</name>
</gene>
<comment type="function">
    <text evidence="1">Catalyzes the hydrolysis of esters.</text>
</comment>
<comment type="catalytic activity">
    <reaction evidence="1">
        <text>a carboxylic ester + H2O = an alcohol + a carboxylate + H(+)</text>
        <dbReference type="Rhea" id="RHEA:21164"/>
        <dbReference type="ChEBI" id="CHEBI:15377"/>
        <dbReference type="ChEBI" id="CHEBI:15378"/>
        <dbReference type="ChEBI" id="CHEBI:29067"/>
        <dbReference type="ChEBI" id="CHEBI:30879"/>
        <dbReference type="ChEBI" id="CHEBI:33308"/>
        <dbReference type="EC" id="3.1.1.1"/>
    </reaction>
</comment>
<comment type="similarity">
    <text evidence="1">Belongs to the FrsA family.</text>
</comment>
<dbReference type="EC" id="3.1.1.1" evidence="1"/>
<dbReference type="EMBL" id="CP000970">
    <property type="protein sequence ID" value="ACB17231.1"/>
    <property type="molecule type" value="Genomic_DNA"/>
</dbReference>
<dbReference type="RefSeq" id="WP_000189541.1">
    <property type="nucleotide sequence ID" value="NC_010498.1"/>
</dbReference>
<dbReference type="SMR" id="B1LHT5"/>
<dbReference type="ESTHER" id="ecoli-yafa">
    <property type="family name" value="Duf_1100-R"/>
</dbReference>
<dbReference type="GeneID" id="75170206"/>
<dbReference type="KEGG" id="ecm:EcSMS35_0293"/>
<dbReference type="HOGENOM" id="CLU_036819_0_0_6"/>
<dbReference type="Proteomes" id="UP000007011">
    <property type="component" value="Chromosome"/>
</dbReference>
<dbReference type="GO" id="GO:0106435">
    <property type="term" value="F:carboxylesterase activity"/>
    <property type="evidence" value="ECO:0007669"/>
    <property type="project" value="UniProtKB-EC"/>
</dbReference>
<dbReference type="FunFam" id="3.40.50.1820:FF:000022">
    <property type="entry name" value="Esterase FrsA"/>
    <property type="match status" value="1"/>
</dbReference>
<dbReference type="Gene3D" id="3.40.50.1820">
    <property type="entry name" value="alpha/beta hydrolase"/>
    <property type="match status" value="1"/>
</dbReference>
<dbReference type="HAMAP" id="MF_01063">
    <property type="entry name" value="FrsA"/>
    <property type="match status" value="1"/>
</dbReference>
<dbReference type="InterPro" id="IPR029058">
    <property type="entry name" value="AB_hydrolase_fold"/>
</dbReference>
<dbReference type="InterPro" id="IPR043423">
    <property type="entry name" value="FrsA"/>
</dbReference>
<dbReference type="InterPro" id="IPR010520">
    <property type="entry name" value="FrsA-like"/>
</dbReference>
<dbReference type="InterPro" id="IPR050261">
    <property type="entry name" value="FrsA_esterase"/>
</dbReference>
<dbReference type="NCBIfam" id="NF003460">
    <property type="entry name" value="PRK05077.1"/>
    <property type="match status" value="1"/>
</dbReference>
<dbReference type="PANTHER" id="PTHR22946">
    <property type="entry name" value="DIENELACTONE HYDROLASE DOMAIN-CONTAINING PROTEIN-RELATED"/>
    <property type="match status" value="1"/>
</dbReference>
<dbReference type="PANTHER" id="PTHR22946:SF4">
    <property type="entry name" value="ESTERASE FRSA"/>
    <property type="match status" value="1"/>
</dbReference>
<dbReference type="Pfam" id="PF06500">
    <property type="entry name" value="FrsA-like"/>
    <property type="match status" value="1"/>
</dbReference>
<dbReference type="SUPFAM" id="SSF53474">
    <property type="entry name" value="alpha/beta-Hydrolases"/>
    <property type="match status" value="1"/>
</dbReference>
<name>FRSA_ECOSM</name>
<keyword id="KW-0378">Hydrolase</keyword>
<keyword id="KW-0719">Serine esterase</keyword>
<sequence length="414" mass="47023">MTQANLSETLFKPRFKHPETSTLVRRFNHGAQPPVQSALDGKTIPHWYRMINRLMWIWRGIDPREILDVQARIVMSDAERTDDDLYDTVIGYRGGNWIYEWATQAMVWQQKACAEEDPQLSGRHWLHAATLYNIAAYPHLKGDDLAEQAQALSNRAYEEAAQRLPGTMRQMEFTVPGGAPITGFLHMPKGDGPFPTVLMCGGLDAMQTDYYSLYERYFAPRGIAMLTIDMPSVGFSSKWKLTQDSSLLHQHVLKALPNVPWVDHTRVAAFGFRFGANVAVRLAYLESPRLKAVACLGPVVHTLLSDFKCQQQVPEMYLDVLASRLGMHDASDEALRVELNRYSLKVQGLLGRRCPTPMLSGYWKNDPFSPEEDSRLITSSSADGKLLEIPFNPVYRNFDKGLQEITDWIEKRLC</sequence>
<proteinExistence type="inferred from homology"/>